<proteinExistence type="inferred from homology"/>
<geneLocation type="plasmid">
    <name>pCFF04</name>
</geneLocation>
<keyword id="KW-0229">DNA integration</keyword>
<keyword id="KW-0233">DNA recombination</keyword>
<keyword id="KW-0238">DNA-binding</keyword>
<keyword id="KW-0614">Plasmid</keyword>
<keyword id="KW-0814">Transposable element</keyword>
<accession>P0ADI3</accession>
<accession>P03011</accession>
<comment type="function">
    <text>Resolvase catalyzes the resolution (a site-specific recombination) of the cointegrated replicon to yield the final transposition products.</text>
</comment>
<comment type="similarity">
    <text evidence="3">Belongs to the site-specific recombinase resolvase family.</text>
</comment>
<evidence type="ECO:0000255" key="1"/>
<evidence type="ECO:0000255" key="2">
    <source>
        <dbReference type="PROSITE-ProRule" id="PRU01072"/>
    </source>
</evidence>
<evidence type="ECO:0000305" key="3"/>
<organism>
    <name type="scientific">Klebsiella pneumoniae</name>
    <dbReference type="NCBI Taxonomy" id="573"/>
    <lineage>
        <taxon>Bacteria</taxon>
        <taxon>Pseudomonadati</taxon>
        <taxon>Pseudomonadota</taxon>
        <taxon>Gammaproteobacteria</taxon>
        <taxon>Enterobacterales</taxon>
        <taxon>Enterobacteriaceae</taxon>
        <taxon>Klebsiella/Raoultella group</taxon>
        <taxon>Klebsiella</taxon>
        <taxon>Klebsiella pneumoniae complex</taxon>
    </lineage>
</organism>
<gene>
    <name type="primary">tnpR</name>
</gene>
<feature type="chain" id="PRO_0000196369" description="Transposon Tn3 resolvase">
    <location>
        <begin position="1"/>
        <end position="185"/>
    </location>
</feature>
<feature type="domain" description="Resolvase/invertase-type recombinase catalytic" evidence="2">
    <location>
        <begin position="2"/>
        <end position="137"/>
    </location>
</feature>
<feature type="DNA-binding region" description="H-T-H motif" evidence="1">
    <location>
        <begin position="161"/>
        <end position="180"/>
    </location>
</feature>
<feature type="active site" description="O-(5'-phospho-DNA)-serine intermediate" evidence="2">
    <location>
        <position position="10"/>
    </location>
</feature>
<sequence>MRIFGYARVSTSQQSLDIQIRALKDAGVKANRIFTDKASGSSTDREGLDLLRMKVEEGDVILVKKLDRLGRDTADMIQLIKEFDAQGVAVRFIDDGISTDGDMGQMVVTILSAVAQAERRRILERTNEGRQEAKLKGIKFGRRRTVDRNVVLTLHQKGTGATEIAHQLSIARSTVYKILEDERAS</sequence>
<reference key="1">
    <citation type="journal article" date="1992" name="Mol. Gen. Genet.">
        <title>A new example of physical linkage between Tn1 and Tn21: the antibiotic multiple-resistance region of plasmid pCFF04 encoding extended-spectrum beta-lactamase TEM-3.</title>
        <authorList>
            <person name="Mabilat C."/>
            <person name="Lourencao-Vital J."/>
            <person name="Goussard S."/>
            <person name="Courvalin P."/>
        </authorList>
    </citation>
    <scope>NUCLEOTIDE SEQUENCE [GENOMIC DNA]</scope>
</reference>
<name>TNR3_KLEPN</name>
<dbReference type="EMBL" id="X64523">
    <property type="protein sequence ID" value="CAA45829.1"/>
    <property type="molecule type" value="Genomic_DNA"/>
</dbReference>
<dbReference type="PIR" id="S30114">
    <property type="entry name" value="S30114"/>
</dbReference>
<dbReference type="RefSeq" id="NP_608306.1">
    <property type="nucleotide sequence ID" value="NC_003486.1"/>
</dbReference>
<dbReference type="RefSeq" id="WP_001217881.1">
    <property type="nucleotide sequence ID" value="NZ_WWPX01000044.1"/>
</dbReference>
<dbReference type="RefSeq" id="YP_001928082.1">
    <property type="nucleotide sequence ID" value="NC_010726.1"/>
</dbReference>
<dbReference type="RefSeq" id="YP_002286820.1">
    <property type="nucleotide sequence ID" value="NC_011382.1"/>
</dbReference>
<dbReference type="RefSeq" id="YP_002286970.1">
    <property type="nucleotide sequence ID" value="NC_011385.1"/>
</dbReference>
<dbReference type="RefSeq" id="YP_003754014.1">
    <property type="nucleotide sequence ID" value="NC_014312.1"/>
</dbReference>
<dbReference type="RefSeq" id="YP_006958959.1">
    <property type="nucleotide sequence ID" value="NC_019156.1"/>
</dbReference>
<dbReference type="RefSeq" id="YP_006959189.1">
    <property type="nucleotide sequence ID" value="NC_019159.1"/>
</dbReference>
<dbReference type="RefSeq" id="YP_007195422.1">
    <property type="nucleotide sequence ID" value="NC_019888.1"/>
</dbReference>
<dbReference type="RefSeq" id="YP_007878587.1">
    <property type="nucleotide sequence ID" value="NC_021079.1"/>
</dbReference>
<dbReference type="RefSeq" id="YP_008166966.1">
    <property type="nucleotide sequence ID" value="NC_021666.1"/>
</dbReference>
<dbReference type="RefSeq" id="YP_008603394.1">
    <property type="nucleotide sequence ID" value="NC_022520.1"/>
</dbReference>
<dbReference type="RefSeq" id="YP_008998914.1">
    <property type="nucleotide sequence ID" value="NC_023331.1"/>
</dbReference>
<dbReference type="RefSeq" id="YP_009067784.1">
    <property type="nucleotide sequence ID" value="NC_025131.1"/>
</dbReference>
<dbReference type="RefSeq" id="YP_009067869.1">
    <property type="nucleotide sequence ID" value="NC_025134.1"/>
</dbReference>
<dbReference type="RefSeq" id="YP_009071731.1">
    <property type="nucleotide sequence ID" value="NC_025185.1"/>
</dbReference>
<dbReference type="SMR" id="P0ADI3"/>
<dbReference type="OMA" id="EQIRFAY"/>
<dbReference type="GO" id="GO:0003677">
    <property type="term" value="F:DNA binding"/>
    <property type="evidence" value="ECO:0007669"/>
    <property type="project" value="UniProtKB-KW"/>
</dbReference>
<dbReference type="GO" id="GO:0000150">
    <property type="term" value="F:DNA strand exchange activity"/>
    <property type="evidence" value="ECO:0007669"/>
    <property type="project" value="InterPro"/>
</dbReference>
<dbReference type="GO" id="GO:0015074">
    <property type="term" value="P:DNA integration"/>
    <property type="evidence" value="ECO:0007669"/>
    <property type="project" value="UniProtKB-KW"/>
</dbReference>
<dbReference type="CDD" id="cd03768">
    <property type="entry name" value="SR_ResInv"/>
    <property type="match status" value="1"/>
</dbReference>
<dbReference type="FunFam" id="3.40.50.1390:FF:000005">
    <property type="entry name" value="TnpR recombinase"/>
    <property type="match status" value="1"/>
</dbReference>
<dbReference type="Gene3D" id="6.10.250.10">
    <property type="match status" value="1"/>
</dbReference>
<dbReference type="Gene3D" id="1.10.10.60">
    <property type="entry name" value="Homeodomain-like"/>
    <property type="match status" value="1"/>
</dbReference>
<dbReference type="Gene3D" id="3.40.50.1390">
    <property type="entry name" value="Resolvase, N-terminal catalytic domain"/>
    <property type="match status" value="1"/>
</dbReference>
<dbReference type="InterPro" id="IPR009057">
    <property type="entry name" value="Homeodomain-like_sf"/>
</dbReference>
<dbReference type="InterPro" id="IPR006118">
    <property type="entry name" value="Recombinase_CS"/>
</dbReference>
<dbReference type="InterPro" id="IPR006119">
    <property type="entry name" value="Resolv_N"/>
</dbReference>
<dbReference type="InterPro" id="IPR036162">
    <property type="entry name" value="Resolvase-like_N_sf"/>
</dbReference>
<dbReference type="InterPro" id="IPR006120">
    <property type="entry name" value="Resolvase_HTH_dom"/>
</dbReference>
<dbReference type="InterPro" id="IPR050639">
    <property type="entry name" value="SSR_resolvase"/>
</dbReference>
<dbReference type="PANTHER" id="PTHR30461">
    <property type="entry name" value="DNA-INVERTASE FROM LAMBDOID PROPHAGE"/>
    <property type="match status" value="1"/>
</dbReference>
<dbReference type="PANTHER" id="PTHR30461:SF26">
    <property type="entry name" value="RESOLVASE HOMOLOG YNEB"/>
    <property type="match status" value="1"/>
</dbReference>
<dbReference type="Pfam" id="PF02796">
    <property type="entry name" value="HTH_7"/>
    <property type="match status" value="1"/>
</dbReference>
<dbReference type="Pfam" id="PF00239">
    <property type="entry name" value="Resolvase"/>
    <property type="match status" value="1"/>
</dbReference>
<dbReference type="SMART" id="SM00857">
    <property type="entry name" value="Resolvase"/>
    <property type="match status" value="1"/>
</dbReference>
<dbReference type="SUPFAM" id="SSF46689">
    <property type="entry name" value="Homeodomain-like"/>
    <property type="match status" value="1"/>
</dbReference>
<dbReference type="SUPFAM" id="SSF53041">
    <property type="entry name" value="Resolvase-like"/>
    <property type="match status" value="1"/>
</dbReference>
<dbReference type="PROSITE" id="PS00397">
    <property type="entry name" value="RECOMBINASES_1"/>
    <property type="match status" value="1"/>
</dbReference>
<dbReference type="PROSITE" id="PS00398">
    <property type="entry name" value="RECOMBINASES_2"/>
    <property type="match status" value="1"/>
</dbReference>
<dbReference type="PROSITE" id="PS51736">
    <property type="entry name" value="RECOMBINASES_3"/>
    <property type="match status" value="1"/>
</dbReference>
<protein>
    <recommendedName>
        <fullName>Transposon Tn3 resolvase</fullName>
    </recommendedName>
</protein>